<evidence type="ECO:0000255" key="1">
    <source>
        <dbReference type="HAMAP-Rule" id="MF_00272"/>
    </source>
</evidence>
<evidence type="ECO:0000255" key="2">
    <source>
        <dbReference type="PROSITE-ProRule" id="PRU01066"/>
    </source>
</evidence>
<sequence length="126" mass="14230">MAVPSEFKYSKEHEWVKIENNVATIGITEYAQNELGDIVFVELPETDDELNEGDTFGSVESVKTVSELYAPISGKIVEVNEELEDSPEFVNESPYEKAWMVKIEISDDSQLEELLSADQYSEMIGE</sequence>
<name>GCSH_STAEQ</name>
<proteinExistence type="inferred from homology"/>
<feature type="chain" id="PRO_0000166253" description="Glycine cleavage system H protein">
    <location>
        <begin position="1"/>
        <end position="126"/>
    </location>
</feature>
<feature type="domain" description="Lipoyl-binding" evidence="2">
    <location>
        <begin position="22"/>
        <end position="104"/>
    </location>
</feature>
<feature type="modified residue" description="N6-lipoyllysine" evidence="1">
    <location>
        <position position="63"/>
    </location>
</feature>
<organism>
    <name type="scientific">Staphylococcus epidermidis (strain ATCC 35984 / DSM 28319 / BCRC 17069 / CCUG 31568 / BM 3577 / RP62A)</name>
    <dbReference type="NCBI Taxonomy" id="176279"/>
    <lineage>
        <taxon>Bacteria</taxon>
        <taxon>Bacillati</taxon>
        <taxon>Bacillota</taxon>
        <taxon>Bacilli</taxon>
        <taxon>Bacillales</taxon>
        <taxon>Staphylococcaceae</taxon>
        <taxon>Staphylococcus</taxon>
    </lineage>
</organism>
<comment type="function">
    <text evidence="1">The glycine cleavage system catalyzes the degradation of glycine. The H protein shuttles the methylamine group of glycine from the P protein to the T protein.</text>
</comment>
<comment type="function">
    <text evidence="1">Is also involved in protein lipoylation via its role as an octanoyl/lipoyl carrier protein intermediate.</text>
</comment>
<comment type="cofactor">
    <cofactor evidence="1">
        <name>(R)-lipoate</name>
        <dbReference type="ChEBI" id="CHEBI:83088"/>
    </cofactor>
    <text evidence="1">Binds 1 lipoyl cofactor covalently.</text>
</comment>
<comment type="subunit">
    <text evidence="1">The glycine cleavage system is composed of four proteins: P, T, L and H.</text>
</comment>
<comment type="similarity">
    <text evidence="1">Belongs to the GcvH family.</text>
</comment>
<dbReference type="EMBL" id="CP000029">
    <property type="protein sequence ID" value="AAW53844.1"/>
    <property type="molecule type" value="Genomic_DNA"/>
</dbReference>
<dbReference type="RefSeq" id="WP_002438979.1">
    <property type="nucleotide sequence ID" value="NC_002976.3"/>
</dbReference>
<dbReference type="SMR" id="Q5HQR3"/>
<dbReference type="STRING" id="176279.SERP0485"/>
<dbReference type="GeneID" id="50019254"/>
<dbReference type="KEGG" id="ser:SERP0485"/>
<dbReference type="eggNOG" id="COG0509">
    <property type="taxonomic scope" value="Bacteria"/>
</dbReference>
<dbReference type="HOGENOM" id="CLU_097408_2_0_9"/>
<dbReference type="Proteomes" id="UP000000531">
    <property type="component" value="Chromosome"/>
</dbReference>
<dbReference type="GO" id="GO:0005829">
    <property type="term" value="C:cytosol"/>
    <property type="evidence" value="ECO:0007669"/>
    <property type="project" value="TreeGrafter"/>
</dbReference>
<dbReference type="GO" id="GO:0005960">
    <property type="term" value="C:glycine cleavage complex"/>
    <property type="evidence" value="ECO:0007669"/>
    <property type="project" value="InterPro"/>
</dbReference>
<dbReference type="GO" id="GO:0019464">
    <property type="term" value="P:glycine decarboxylation via glycine cleavage system"/>
    <property type="evidence" value="ECO:0007669"/>
    <property type="project" value="UniProtKB-UniRule"/>
</dbReference>
<dbReference type="CDD" id="cd06848">
    <property type="entry name" value="GCS_H"/>
    <property type="match status" value="1"/>
</dbReference>
<dbReference type="Gene3D" id="2.40.50.100">
    <property type="match status" value="1"/>
</dbReference>
<dbReference type="HAMAP" id="MF_00272">
    <property type="entry name" value="GcvH"/>
    <property type="match status" value="1"/>
</dbReference>
<dbReference type="InterPro" id="IPR003016">
    <property type="entry name" value="2-oxoA_DH_lipoyl-BS"/>
</dbReference>
<dbReference type="InterPro" id="IPR000089">
    <property type="entry name" value="Biotin_lipoyl"/>
</dbReference>
<dbReference type="InterPro" id="IPR002930">
    <property type="entry name" value="GCV_H"/>
</dbReference>
<dbReference type="InterPro" id="IPR033753">
    <property type="entry name" value="GCV_H/Fam206"/>
</dbReference>
<dbReference type="InterPro" id="IPR017453">
    <property type="entry name" value="GCV_H_sub"/>
</dbReference>
<dbReference type="InterPro" id="IPR011053">
    <property type="entry name" value="Single_hybrid_motif"/>
</dbReference>
<dbReference type="NCBIfam" id="TIGR00527">
    <property type="entry name" value="gcvH"/>
    <property type="match status" value="1"/>
</dbReference>
<dbReference type="NCBIfam" id="NF002270">
    <property type="entry name" value="PRK01202.1"/>
    <property type="match status" value="1"/>
</dbReference>
<dbReference type="PANTHER" id="PTHR11715">
    <property type="entry name" value="GLYCINE CLEAVAGE SYSTEM H PROTEIN"/>
    <property type="match status" value="1"/>
</dbReference>
<dbReference type="PANTHER" id="PTHR11715:SF3">
    <property type="entry name" value="GLYCINE CLEAVAGE SYSTEM H PROTEIN-RELATED"/>
    <property type="match status" value="1"/>
</dbReference>
<dbReference type="Pfam" id="PF01597">
    <property type="entry name" value="GCV_H"/>
    <property type="match status" value="1"/>
</dbReference>
<dbReference type="SUPFAM" id="SSF51230">
    <property type="entry name" value="Single hybrid motif"/>
    <property type="match status" value="1"/>
</dbReference>
<dbReference type="PROSITE" id="PS50968">
    <property type="entry name" value="BIOTINYL_LIPOYL"/>
    <property type="match status" value="1"/>
</dbReference>
<dbReference type="PROSITE" id="PS00189">
    <property type="entry name" value="LIPOYL"/>
    <property type="match status" value="1"/>
</dbReference>
<accession>Q5HQR3</accession>
<gene>
    <name evidence="1" type="primary">gcvH</name>
    <name type="ordered locus">SERP0485</name>
</gene>
<keyword id="KW-0450">Lipoyl</keyword>
<keyword id="KW-1185">Reference proteome</keyword>
<protein>
    <recommendedName>
        <fullName evidence="1">Glycine cleavage system H protein</fullName>
    </recommendedName>
    <alternativeName>
        <fullName evidence="1">Octanoyl/lipoyl carrier protein</fullName>
    </alternativeName>
</protein>
<reference key="1">
    <citation type="journal article" date="2005" name="J. Bacteriol.">
        <title>Insights on evolution of virulence and resistance from the complete genome analysis of an early methicillin-resistant Staphylococcus aureus strain and a biofilm-producing methicillin-resistant Staphylococcus epidermidis strain.</title>
        <authorList>
            <person name="Gill S.R."/>
            <person name="Fouts D.E."/>
            <person name="Archer G.L."/>
            <person name="Mongodin E.F."/>
            <person name="DeBoy R.T."/>
            <person name="Ravel J."/>
            <person name="Paulsen I.T."/>
            <person name="Kolonay J.F."/>
            <person name="Brinkac L.M."/>
            <person name="Beanan M.J."/>
            <person name="Dodson R.J."/>
            <person name="Daugherty S.C."/>
            <person name="Madupu R."/>
            <person name="Angiuoli S.V."/>
            <person name="Durkin A.S."/>
            <person name="Haft D.H."/>
            <person name="Vamathevan J.J."/>
            <person name="Khouri H."/>
            <person name="Utterback T.R."/>
            <person name="Lee C."/>
            <person name="Dimitrov G."/>
            <person name="Jiang L."/>
            <person name="Qin H."/>
            <person name="Weidman J."/>
            <person name="Tran K."/>
            <person name="Kang K.H."/>
            <person name="Hance I.R."/>
            <person name="Nelson K.E."/>
            <person name="Fraser C.M."/>
        </authorList>
    </citation>
    <scope>NUCLEOTIDE SEQUENCE [LARGE SCALE GENOMIC DNA]</scope>
    <source>
        <strain>ATCC 35984 / DSM 28319 / BCRC 17069 / CCUG 31568 / BM 3577 / RP62A</strain>
    </source>
</reference>